<organism>
    <name type="scientific">Campylobacter curvus (strain 525.92)</name>
    <dbReference type="NCBI Taxonomy" id="360105"/>
    <lineage>
        <taxon>Bacteria</taxon>
        <taxon>Pseudomonadati</taxon>
        <taxon>Campylobacterota</taxon>
        <taxon>Epsilonproteobacteria</taxon>
        <taxon>Campylobacterales</taxon>
        <taxon>Campylobacteraceae</taxon>
        <taxon>Campylobacter</taxon>
    </lineage>
</organism>
<comment type="function">
    <text evidence="1">NDH-1 shuttles electrons from NADH, via FMN and iron-sulfur (Fe-S) centers, to quinones in the respiratory chain. The immediate electron acceptor for the enzyme in this species is believed to be ubiquinone. Couples the redox reaction to proton translocation (for every two electrons transferred, four hydrogen ions are translocated across the cytoplasmic membrane), and thus conserves the redox energy in a proton gradient.</text>
</comment>
<comment type="catalytic activity">
    <reaction evidence="1">
        <text>a quinone + NADH + 5 H(+)(in) = a quinol + NAD(+) + 4 H(+)(out)</text>
        <dbReference type="Rhea" id="RHEA:57888"/>
        <dbReference type="ChEBI" id="CHEBI:15378"/>
        <dbReference type="ChEBI" id="CHEBI:24646"/>
        <dbReference type="ChEBI" id="CHEBI:57540"/>
        <dbReference type="ChEBI" id="CHEBI:57945"/>
        <dbReference type="ChEBI" id="CHEBI:132124"/>
    </reaction>
</comment>
<comment type="subunit">
    <text evidence="1">NDH-1 is composed of 14 different subunits. Subunits NuoA, H, J, K, L, M, N constitute the membrane sector of the complex.</text>
</comment>
<comment type="subcellular location">
    <subcellularLocation>
        <location evidence="1">Cell inner membrane</location>
        <topology evidence="1">Multi-pass membrane protein</topology>
    </subcellularLocation>
</comment>
<comment type="similarity">
    <text evidence="1">Belongs to the complex I subunit 4L family.</text>
</comment>
<proteinExistence type="inferred from homology"/>
<dbReference type="EC" id="7.1.1.-" evidence="1"/>
<dbReference type="EMBL" id="CP000767">
    <property type="protein sequence ID" value="EAU00600.1"/>
    <property type="molecule type" value="Genomic_DNA"/>
</dbReference>
<dbReference type="RefSeq" id="WP_011991722.1">
    <property type="nucleotide sequence ID" value="NC_009715.2"/>
</dbReference>
<dbReference type="SMR" id="A7GW60"/>
<dbReference type="STRING" id="360105.CCV52592_1519"/>
<dbReference type="GeneID" id="61001440"/>
<dbReference type="KEGG" id="ccv:CCV52592_1519"/>
<dbReference type="HOGENOM" id="CLU_144724_0_0_7"/>
<dbReference type="OrthoDB" id="9810120at2"/>
<dbReference type="Proteomes" id="UP000006380">
    <property type="component" value="Chromosome"/>
</dbReference>
<dbReference type="GO" id="GO:0030964">
    <property type="term" value="C:NADH dehydrogenase complex"/>
    <property type="evidence" value="ECO:0007669"/>
    <property type="project" value="TreeGrafter"/>
</dbReference>
<dbReference type="GO" id="GO:0005886">
    <property type="term" value="C:plasma membrane"/>
    <property type="evidence" value="ECO:0007669"/>
    <property type="project" value="UniProtKB-SubCell"/>
</dbReference>
<dbReference type="GO" id="GO:0050136">
    <property type="term" value="F:NADH:ubiquinone reductase (non-electrogenic) activity"/>
    <property type="evidence" value="ECO:0007669"/>
    <property type="project" value="UniProtKB-UniRule"/>
</dbReference>
<dbReference type="GO" id="GO:0048038">
    <property type="term" value="F:quinone binding"/>
    <property type="evidence" value="ECO:0007669"/>
    <property type="project" value="UniProtKB-KW"/>
</dbReference>
<dbReference type="GO" id="GO:0042773">
    <property type="term" value="P:ATP synthesis coupled electron transport"/>
    <property type="evidence" value="ECO:0007669"/>
    <property type="project" value="InterPro"/>
</dbReference>
<dbReference type="FunFam" id="1.10.287.3510:FF:000001">
    <property type="entry name" value="NADH-quinone oxidoreductase subunit K"/>
    <property type="match status" value="1"/>
</dbReference>
<dbReference type="Gene3D" id="1.10.287.3510">
    <property type="match status" value="1"/>
</dbReference>
<dbReference type="HAMAP" id="MF_01456">
    <property type="entry name" value="NDH1_NuoK"/>
    <property type="match status" value="1"/>
</dbReference>
<dbReference type="InterPro" id="IPR001133">
    <property type="entry name" value="NADH_UbQ_OxRdtase_chain4L/K"/>
</dbReference>
<dbReference type="InterPro" id="IPR039428">
    <property type="entry name" value="NUOK/Mnh_C1-like"/>
</dbReference>
<dbReference type="NCBIfam" id="NF004320">
    <property type="entry name" value="PRK05715.1-2"/>
    <property type="match status" value="1"/>
</dbReference>
<dbReference type="NCBIfam" id="NF004323">
    <property type="entry name" value="PRK05715.1-5"/>
    <property type="match status" value="1"/>
</dbReference>
<dbReference type="PANTHER" id="PTHR11434:SF21">
    <property type="entry name" value="NADH DEHYDROGENASE SUBUNIT 4L-RELATED"/>
    <property type="match status" value="1"/>
</dbReference>
<dbReference type="PANTHER" id="PTHR11434">
    <property type="entry name" value="NADH-UBIQUINONE OXIDOREDUCTASE SUBUNIT ND4L"/>
    <property type="match status" value="1"/>
</dbReference>
<dbReference type="Pfam" id="PF00420">
    <property type="entry name" value="Oxidored_q2"/>
    <property type="match status" value="1"/>
</dbReference>
<feature type="chain" id="PRO_0000390004" description="NADH-quinone oxidoreductase subunit K">
    <location>
        <begin position="1"/>
        <end position="100"/>
    </location>
</feature>
<feature type="transmembrane region" description="Helical" evidence="1">
    <location>
        <begin position="2"/>
        <end position="22"/>
    </location>
</feature>
<feature type="transmembrane region" description="Helical" evidence="1">
    <location>
        <begin position="29"/>
        <end position="49"/>
    </location>
</feature>
<feature type="transmembrane region" description="Helical" evidence="1">
    <location>
        <begin position="63"/>
        <end position="83"/>
    </location>
</feature>
<keyword id="KW-0997">Cell inner membrane</keyword>
<keyword id="KW-1003">Cell membrane</keyword>
<keyword id="KW-0472">Membrane</keyword>
<keyword id="KW-0520">NAD</keyword>
<keyword id="KW-0874">Quinone</keyword>
<keyword id="KW-1185">Reference proteome</keyword>
<keyword id="KW-1278">Translocase</keyword>
<keyword id="KW-0812">Transmembrane</keyword>
<keyword id="KW-1133">Transmembrane helix</keyword>
<keyword id="KW-0813">Transport</keyword>
<keyword id="KW-0830">Ubiquinone</keyword>
<evidence type="ECO:0000255" key="1">
    <source>
        <dbReference type="HAMAP-Rule" id="MF_01456"/>
    </source>
</evidence>
<name>NUOK_CAMC5</name>
<protein>
    <recommendedName>
        <fullName evidence="1">NADH-quinone oxidoreductase subunit K</fullName>
        <ecNumber evidence="1">7.1.1.-</ecNumber>
    </recommendedName>
    <alternativeName>
        <fullName evidence="1">NADH dehydrogenase I subunit K</fullName>
    </alternativeName>
    <alternativeName>
        <fullName evidence="1">NDH-1 subunit K</fullName>
    </alternativeName>
</protein>
<gene>
    <name evidence="1" type="primary">nuoK</name>
    <name type="ordered locus">Ccur92_01480</name>
    <name type="ORF">CCV52592_1519</name>
</gene>
<accession>A7GW60</accession>
<sequence>MITLSHYLVVAALMFVLGLIGIMKRNNLIMLFFSSEILLNAANVALAAISKFYNDITGQIFALFIVAVAASEVAVGLGLLILWYKKTGSIELSSMNNMRD</sequence>
<reference key="1">
    <citation type="submission" date="2007-07" db="EMBL/GenBank/DDBJ databases">
        <title>Genome sequence of Campylobacter curvus 525.92 isolated from human feces.</title>
        <authorList>
            <person name="Fouts D.E."/>
            <person name="Mongodin E.F."/>
            <person name="Puiu D."/>
            <person name="Sebastian Y."/>
            <person name="Miller W.G."/>
            <person name="Mandrell R.E."/>
            <person name="Lastovica A.J."/>
            <person name="Nelson K.E."/>
        </authorList>
    </citation>
    <scope>NUCLEOTIDE SEQUENCE [LARGE SCALE GENOMIC DNA]</scope>
    <source>
        <strain>525.92</strain>
    </source>
</reference>